<sequence length="307" mass="33731">MDINLDALVEANRRYTKEGHVATYIPALAKVNPDQLGVCIYDLKENKEFSAGEYDVRFAIESISKVPTLILAILDNGIEKVFSEVGTEPSGFAFNSIMNMQINHKNKPSNPFINAGAIKVVSLLKGKNDEERFKRILDFYRKIMNDDEITLDTEIYLSERETGDINRSLAYYMKGNGIMEGDVTDILDSYFKQCSVLVTAKDLARLGAVLANEGVMPWNGERLFSVETATVVKSLMTTYGLYDESGAFSVHIGLPSKSGVGGGILSSVPNKCGIGLFSPALDVSGNSVASMKLLKEIADKLKLDIFR</sequence>
<evidence type="ECO:0000255" key="1">
    <source>
        <dbReference type="HAMAP-Rule" id="MF_00313"/>
    </source>
</evidence>
<protein>
    <recommendedName>
        <fullName evidence="1">Glutaminase 1</fullName>
        <ecNumber evidence="1">3.5.1.2</ecNumber>
    </recommendedName>
</protein>
<gene>
    <name evidence="1" type="primary">glsA1</name>
    <name type="ordered locus">CPE0591</name>
</gene>
<comment type="catalytic activity">
    <reaction evidence="1">
        <text>L-glutamine + H2O = L-glutamate + NH4(+)</text>
        <dbReference type="Rhea" id="RHEA:15889"/>
        <dbReference type="ChEBI" id="CHEBI:15377"/>
        <dbReference type="ChEBI" id="CHEBI:28938"/>
        <dbReference type="ChEBI" id="CHEBI:29985"/>
        <dbReference type="ChEBI" id="CHEBI:58359"/>
        <dbReference type="EC" id="3.5.1.2"/>
    </reaction>
</comment>
<comment type="subunit">
    <text evidence="1">Homotetramer.</text>
</comment>
<comment type="similarity">
    <text evidence="1">Belongs to the glutaminase family.</text>
</comment>
<reference key="1">
    <citation type="journal article" date="2002" name="Proc. Natl. Acad. Sci. U.S.A.">
        <title>Complete genome sequence of Clostridium perfringens, an anaerobic flesh-eater.</title>
        <authorList>
            <person name="Shimizu T."/>
            <person name="Ohtani K."/>
            <person name="Hirakawa H."/>
            <person name="Ohshima K."/>
            <person name="Yamashita A."/>
            <person name="Shiba T."/>
            <person name="Ogasawara N."/>
            <person name="Hattori M."/>
            <person name="Kuhara S."/>
            <person name="Hayashi H."/>
        </authorList>
    </citation>
    <scope>NUCLEOTIDE SEQUENCE [LARGE SCALE GENOMIC DNA]</scope>
    <source>
        <strain>13 / Type A</strain>
    </source>
</reference>
<feature type="chain" id="PRO_0000110602" description="Glutaminase 1">
    <location>
        <begin position="1"/>
        <end position="307"/>
    </location>
</feature>
<feature type="binding site" evidence="1">
    <location>
        <position position="62"/>
    </location>
    <ligand>
        <name>substrate</name>
    </ligand>
</feature>
<feature type="binding site" evidence="1">
    <location>
        <position position="114"/>
    </location>
    <ligand>
        <name>substrate</name>
    </ligand>
</feature>
<feature type="binding site" evidence="1">
    <location>
        <position position="159"/>
    </location>
    <ligand>
        <name>substrate</name>
    </ligand>
</feature>
<feature type="binding site" evidence="1">
    <location>
        <position position="166"/>
    </location>
    <ligand>
        <name>substrate</name>
    </ligand>
</feature>
<feature type="binding site" evidence="1">
    <location>
        <position position="190"/>
    </location>
    <ligand>
        <name>substrate</name>
    </ligand>
</feature>
<feature type="binding site" evidence="1">
    <location>
        <position position="242"/>
    </location>
    <ligand>
        <name>substrate</name>
    </ligand>
</feature>
<feature type="binding site" evidence="1">
    <location>
        <position position="260"/>
    </location>
    <ligand>
        <name>substrate</name>
    </ligand>
</feature>
<dbReference type="EC" id="3.5.1.2" evidence="1"/>
<dbReference type="EMBL" id="BA000016">
    <property type="protein sequence ID" value="BAB80297.1"/>
    <property type="molecule type" value="Genomic_DNA"/>
</dbReference>
<dbReference type="RefSeq" id="WP_011009915.1">
    <property type="nucleotide sequence ID" value="NC_003366.1"/>
</dbReference>
<dbReference type="SMR" id="Q8XMU7"/>
<dbReference type="STRING" id="195102.gene:10489848"/>
<dbReference type="KEGG" id="cpe:CPE0591"/>
<dbReference type="HOGENOM" id="CLU_027932_1_1_9"/>
<dbReference type="Proteomes" id="UP000000818">
    <property type="component" value="Chromosome"/>
</dbReference>
<dbReference type="GO" id="GO:0004359">
    <property type="term" value="F:glutaminase activity"/>
    <property type="evidence" value="ECO:0007669"/>
    <property type="project" value="UniProtKB-UniRule"/>
</dbReference>
<dbReference type="GO" id="GO:0006537">
    <property type="term" value="P:glutamate biosynthetic process"/>
    <property type="evidence" value="ECO:0007669"/>
    <property type="project" value="TreeGrafter"/>
</dbReference>
<dbReference type="GO" id="GO:0006543">
    <property type="term" value="P:glutamine catabolic process"/>
    <property type="evidence" value="ECO:0007669"/>
    <property type="project" value="TreeGrafter"/>
</dbReference>
<dbReference type="FunFam" id="3.40.710.10:FF:000005">
    <property type="entry name" value="Glutaminase"/>
    <property type="match status" value="1"/>
</dbReference>
<dbReference type="Gene3D" id="3.40.710.10">
    <property type="entry name" value="DD-peptidase/beta-lactamase superfamily"/>
    <property type="match status" value="1"/>
</dbReference>
<dbReference type="HAMAP" id="MF_00313">
    <property type="entry name" value="Glutaminase"/>
    <property type="match status" value="1"/>
</dbReference>
<dbReference type="InterPro" id="IPR012338">
    <property type="entry name" value="Beta-lactam/transpept-like"/>
</dbReference>
<dbReference type="InterPro" id="IPR015868">
    <property type="entry name" value="Glutaminase"/>
</dbReference>
<dbReference type="NCBIfam" id="TIGR03814">
    <property type="entry name" value="Gln_ase"/>
    <property type="match status" value="1"/>
</dbReference>
<dbReference type="PANTHER" id="PTHR12544">
    <property type="entry name" value="GLUTAMINASE"/>
    <property type="match status" value="1"/>
</dbReference>
<dbReference type="PANTHER" id="PTHR12544:SF29">
    <property type="entry name" value="GLUTAMINASE"/>
    <property type="match status" value="1"/>
</dbReference>
<dbReference type="Pfam" id="PF04960">
    <property type="entry name" value="Glutaminase"/>
    <property type="match status" value="1"/>
</dbReference>
<dbReference type="SUPFAM" id="SSF56601">
    <property type="entry name" value="beta-lactamase/transpeptidase-like"/>
    <property type="match status" value="1"/>
</dbReference>
<proteinExistence type="inferred from homology"/>
<organism>
    <name type="scientific">Clostridium perfringens (strain 13 / Type A)</name>
    <dbReference type="NCBI Taxonomy" id="195102"/>
    <lineage>
        <taxon>Bacteria</taxon>
        <taxon>Bacillati</taxon>
        <taxon>Bacillota</taxon>
        <taxon>Clostridia</taxon>
        <taxon>Eubacteriales</taxon>
        <taxon>Clostridiaceae</taxon>
        <taxon>Clostridium</taxon>
    </lineage>
</organism>
<accession>Q8XMU7</accession>
<keyword id="KW-0378">Hydrolase</keyword>
<keyword id="KW-1185">Reference proteome</keyword>
<name>GLSA1_CLOPE</name>